<sequence length="110" mass="12100">MPAPYEKGSEKKGANLFKTRCLQCHTVEEGGPHKVGPNLHGVVGRTSGQAQGFSYTDANKKKGVEWSEQNLSDYLENPKKYIPGTKMAFGGLKKAKDRNDLISYLVKATK</sequence>
<accession>P00043</accession>
<accession>Q6BU85</accession>
<evidence type="ECO:0000269" key="1">
    <source>
    </source>
</evidence>
<evidence type="ECO:0000305" key="2"/>
<name>CYC_DEBHA</name>
<protein>
    <recommendedName>
        <fullName>Cytochrome c</fullName>
    </recommendedName>
</protein>
<proteinExistence type="evidence at protein level"/>
<gene>
    <name type="primary">CYC1</name>
    <name type="ordered locus">DEHA2C12848g</name>
</gene>
<dbReference type="EMBL" id="CR382135">
    <property type="protein sequence ID" value="CAG86310.1"/>
    <property type="molecule type" value="Genomic_DNA"/>
</dbReference>
<dbReference type="PIR" id="A00036">
    <property type="entry name" value="CCDBK"/>
</dbReference>
<dbReference type="RefSeq" id="XP_458234.1">
    <property type="nucleotide sequence ID" value="XM_458234.1"/>
</dbReference>
<dbReference type="SMR" id="P00043"/>
<dbReference type="FunCoup" id="P00043">
    <property type="interactions" value="626"/>
</dbReference>
<dbReference type="STRING" id="284592.P00043"/>
<dbReference type="GeneID" id="2900367"/>
<dbReference type="KEGG" id="dha:DEHA2C12848g"/>
<dbReference type="VEuPathDB" id="FungiDB:DEHA2C12848g"/>
<dbReference type="eggNOG" id="KOG3453">
    <property type="taxonomic scope" value="Eukaryota"/>
</dbReference>
<dbReference type="HOGENOM" id="CLU_060944_3_0_1"/>
<dbReference type="InParanoid" id="P00043"/>
<dbReference type="OMA" id="KARCAQC"/>
<dbReference type="OrthoDB" id="449280at2759"/>
<dbReference type="Proteomes" id="UP000000599">
    <property type="component" value="Chromosome C"/>
</dbReference>
<dbReference type="GO" id="GO:0005758">
    <property type="term" value="C:mitochondrial intermembrane space"/>
    <property type="evidence" value="ECO:0007669"/>
    <property type="project" value="UniProtKB-SubCell"/>
</dbReference>
<dbReference type="GO" id="GO:0009055">
    <property type="term" value="F:electron transfer activity"/>
    <property type="evidence" value="ECO:0007669"/>
    <property type="project" value="InterPro"/>
</dbReference>
<dbReference type="GO" id="GO:0020037">
    <property type="term" value="F:heme binding"/>
    <property type="evidence" value="ECO:0007669"/>
    <property type="project" value="InterPro"/>
</dbReference>
<dbReference type="GO" id="GO:0046872">
    <property type="term" value="F:metal ion binding"/>
    <property type="evidence" value="ECO:0007669"/>
    <property type="project" value="UniProtKB-KW"/>
</dbReference>
<dbReference type="FunFam" id="1.10.760.10:FF:000001">
    <property type="entry name" value="Cytochrome c iso-1"/>
    <property type="match status" value="1"/>
</dbReference>
<dbReference type="Gene3D" id="1.10.760.10">
    <property type="entry name" value="Cytochrome c-like domain"/>
    <property type="match status" value="1"/>
</dbReference>
<dbReference type="InterPro" id="IPR009056">
    <property type="entry name" value="Cyt_c-like_dom"/>
</dbReference>
<dbReference type="InterPro" id="IPR036909">
    <property type="entry name" value="Cyt_c-like_dom_sf"/>
</dbReference>
<dbReference type="InterPro" id="IPR002327">
    <property type="entry name" value="Cyt_c_1A/1B"/>
</dbReference>
<dbReference type="PANTHER" id="PTHR11961">
    <property type="entry name" value="CYTOCHROME C"/>
    <property type="match status" value="1"/>
</dbReference>
<dbReference type="Pfam" id="PF00034">
    <property type="entry name" value="Cytochrom_C"/>
    <property type="match status" value="1"/>
</dbReference>
<dbReference type="PRINTS" id="PR00604">
    <property type="entry name" value="CYTCHRMECIAB"/>
</dbReference>
<dbReference type="SUPFAM" id="SSF46626">
    <property type="entry name" value="Cytochrome c"/>
    <property type="match status" value="1"/>
</dbReference>
<dbReference type="PROSITE" id="PS51007">
    <property type="entry name" value="CYTC"/>
    <property type="match status" value="1"/>
</dbReference>
<organism>
    <name type="scientific">Debaryomyces hansenii (strain ATCC 36239 / CBS 767 / BCRC 21394 / JCM 1990 / NBRC 0083 / IGC 2968)</name>
    <name type="common">Yeast</name>
    <name type="synonym">Torulaspora hansenii</name>
    <dbReference type="NCBI Taxonomy" id="284592"/>
    <lineage>
        <taxon>Eukaryota</taxon>
        <taxon>Fungi</taxon>
        <taxon>Dikarya</taxon>
        <taxon>Ascomycota</taxon>
        <taxon>Saccharomycotina</taxon>
        <taxon>Pichiomycetes</taxon>
        <taxon>Debaryomycetaceae</taxon>
        <taxon>Debaryomyces</taxon>
    </lineage>
</organism>
<feature type="initiator methionine" description="Removed" evidence="1">
    <location>
        <position position="1"/>
    </location>
</feature>
<feature type="chain" id="PRO_0000108321" description="Cytochrome c">
    <location>
        <begin position="2"/>
        <end position="110"/>
    </location>
</feature>
<feature type="binding site" description="covalent">
    <location>
        <position position="21"/>
    </location>
    <ligand>
        <name>heme c</name>
        <dbReference type="ChEBI" id="CHEBI:61717"/>
    </ligand>
</feature>
<feature type="binding site" description="covalent">
    <location>
        <position position="24"/>
    </location>
    <ligand>
        <name>heme c</name>
        <dbReference type="ChEBI" id="CHEBI:61717"/>
    </ligand>
</feature>
<feature type="binding site" description="axial binding residue">
    <location>
        <position position="25"/>
    </location>
    <ligand>
        <name>heme c</name>
        <dbReference type="ChEBI" id="CHEBI:61717"/>
    </ligand>
    <ligandPart>
        <name>Fe</name>
        <dbReference type="ChEBI" id="CHEBI:18248"/>
    </ligandPart>
</feature>
<feature type="binding site" description="axial binding residue">
    <location>
        <position position="87"/>
    </location>
    <ligand>
        <name>heme c</name>
        <dbReference type="ChEBI" id="CHEBI:61717"/>
    </ligand>
    <ligandPart>
        <name>Fe</name>
        <dbReference type="ChEBI" id="CHEBI:18248"/>
    </ligandPart>
</feature>
<feature type="modified residue" description="N6,N6,N6-trimethyllysine" evidence="1">
    <location>
        <position position="79"/>
    </location>
</feature>
<feature type="sequence conflict" description="In Ref. 2; AA sequence." evidence="2" ref="2">
    <original>S</original>
    <variation>T</variation>
    <location>
        <position position="67"/>
    </location>
</feature>
<feature type="sequence conflict" description="In Ref. 2; AA sequence." evidence="2" ref="2">
    <original>N</original>
    <variation>D</variation>
    <location>
        <position position="70"/>
    </location>
</feature>
<feature type="sequence conflict" description="In Ref. 2; AA sequence." evidence="2" ref="2">
    <original>S</original>
    <variation>T</variation>
    <location>
        <position position="103"/>
    </location>
</feature>
<comment type="function">
    <text>Electron carrier protein. The oxidized form of the cytochrome c heme group can accept an electron from the heme group of the cytochrome c1 subunit of cytochrome reductase. Cytochrome c then transfers this electron to the cytochrome oxidase complex, the final protein carrier in the mitochondrial electron-transport chain.</text>
</comment>
<comment type="subcellular location">
    <subcellularLocation>
        <location>Mitochondrion intermembrane space</location>
    </subcellularLocation>
    <text>Loosely associated with the inner membrane.</text>
</comment>
<comment type="PTM">
    <text>Binds 1 heme c group covalently per subunit.</text>
</comment>
<comment type="similarity">
    <text evidence="2">Belongs to the cytochrome c family.</text>
</comment>
<comment type="online information" name="Protein Spotlight">
    <link uri="https://www.proteinspotlight.org/back_issues/076"/>
    <text>Life shuttle - Issue 76 of November 2006</text>
</comment>
<reference key="1">
    <citation type="journal article" date="2004" name="Nature">
        <title>Genome evolution in yeasts.</title>
        <authorList>
            <person name="Dujon B."/>
            <person name="Sherman D."/>
            <person name="Fischer G."/>
            <person name="Durrens P."/>
            <person name="Casaregola S."/>
            <person name="Lafontaine I."/>
            <person name="de Montigny J."/>
            <person name="Marck C."/>
            <person name="Neuveglise C."/>
            <person name="Talla E."/>
            <person name="Goffard N."/>
            <person name="Frangeul L."/>
            <person name="Aigle M."/>
            <person name="Anthouard V."/>
            <person name="Babour A."/>
            <person name="Barbe V."/>
            <person name="Barnay S."/>
            <person name="Blanchin S."/>
            <person name="Beckerich J.-M."/>
            <person name="Beyne E."/>
            <person name="Bleykasten C."/>
            <person name="Boisrame A."/>
            <person name="Boyer J."/>
            <person name="Cattolico L."/>
            <person name="Confanioleri F."/>
            <person name="de Daruvar A."/>
            <person name="Despons L."/>
            <person name="Fabre E."/>
            <person name="Fairhead C."/>
            <person name="Ferry-Dumazet H."/>
            <person name="Groppi A."/>
            <person name="Hantraye F."/>
            <person name="Hennequin C."/>
            <person name="Jauniaux N."/>
            <person name="Joyet P."/>
            <person name="Kachouri R."/>
            <person name="Kerrest A."/>
            <person name="Koszul R."/>
            <person name="Lemaire M."/>
            <person name="Lesur I."/>
            <person name="Ma L."/>
            <person name="Muller H."/>
            <person name="Nicaud J.-M."/>
            <person name="Nikolski M."/>
            <person name="Oztas S."/>
            <person name="Ozier-Kalogeropoulos O."/>
            <person name="Pellenz S."/>
            <person name="Potier S."/>
            <person name="Richard G.-F."/>
            <person name="Straub M.-L."/>
            <person name="Suleau A."/>
            <person name="Swennen D."/>
            <person name="Tekaia F."/>
            <person name="Wesolowski-Louvel M."/>
            <person name="Westhof E."/>
            <person name="Wirth B."/>
            <person name="Zeniou-Meyer M."/>
            <person name="Zivanovic Y."/>
            <person name="Bolotin-Fukuhara M."/>
            <person name="Thierry A."/>
            <person name="Bouchier C."/>
            <person name="Caudron B."/>
            <person name="Scarpelli C."/>
            <person name="Gaillardin C."/>
            <person name="Weissenbach J."/>
            <person name="Wincker P."/>
            <person name="Souciet J.-L."/>
        </authorList>
    </citation>
    <scope>NUCLEOTIDE SEQUENCE [LARGE SCALE GENOMIC DNA]</scope>
    <source>
        <strain>ATCC 36239 / CBS 767 / BCRC 21394 / JCM 1990 / NBRC 0083 / IGC 2968</strain>
    </source>
</reference>
<reference key="2">
    <citation type="journal article" date="1971" name="J. Biochem.">
        <title>The amino acid sequence of cytochrome c from Debaryomyces kloeckeri.</title>
        <authorList>
            <person name="Sugeno K."/>
            <person name="Narita K."/>
            <person name="Titani K."/>
        </authorList>
    </citation>
    <scope>PROTEIN SEQUENCE OF 2-110</scope>
    <scope>METHYLATION AT LYS-79</scope>
</reference>
<keyword id="KW-0903">Direct protein sequencing</keyword>
<keyword id="KW-0249">Electron transport</keyword>
<keyword id="KW-0349">Heme</keyword>
<keyword id="KW-0408">Iron</keyword>
<keyword id="KW-0479">Metal-binding</keyword>
<keyword id="KW-0488">Methylation</keyword>
<keyword id="KW-0496">Mitochondrion</keyword>
<keyword id="KW-1185">Reference proteome</keyword>
<keyword id="KW-0679">Respiratory chain</keyword>
<keyword id="KW-0813">Transport</keyword>